<name>GMHA_SHESW</name>
<organism>
    <name type="scientific">Shewanella sp. (strain W3-18-1)</name>
    <dbReference type="NCBI Taxonomy" id="351745"/>
    <lineage>
        <taxon>Bacteria</taxon>
        <taxon>Pseudomonadati</taxon>
        <taxon>Pseudomonadota</taxon>
        <taxon>Gammaproteobacteria</taxon>
        <taxon>Alteromonadales</taxon>
        <taxon>Shewanellaceae</taxon>
        <taxon>Shewanella</taxon>
    </lineage>
</organism>
<proteinExistence type="inferred from homology"/>
<accession>A1RPP6</accession>
<keyword id="KW-0119">Carbohydrate metabolism</keyword>
<keyword id="KW-0963">Cytoplasm</keyword>
<keyword id="KW-0413">Isomerase</keyword>
<keyword id="KW-0479">Metal-binding</keyword>
<keyword id="KW-0862">Zinc</keyword>
<evidence type="ECO:0000255" key="1">
    <source>
        <dbReference type="HAMAP-Rule" id="MF_00067"/>
    </source>
</evidence>
<gene>
    <name evidence="1" type="primary">gmhA</name>
    <name type="ordered locus">Sputw3181_3836</name>
</gene>
<sequence length="197" mass="20955">MLERIKDSFTESIQTKIDAAEALPESIAKAAEMMVHCLLGGNKILACGNGGSAGDAQHFSAELLNRYEIERPPLPAIALSTDTSTITAIANDYSYDEIFSKQILALGQPGDILLAISTSGNSGNVIKAMEAALSRDMTIVALTGKDGGAMAGLLSVGDVEIRVPSNVTARIQEVHLLVIHCLCDNIDRTLFPQDEQQ</sequence>
<reference key="1">
    <citation type="submission" date="2006-12" db="EMBL/GenBank/DDBJ databases">
        <title>Complete sequence of Shewanella sp. W3-18-1.</title>
        <authorList>
            <consortium name="US DOE Joint Genome Institute"/>
            <person name="Copeland A."/>
            <person name="Lucas S."/>
            <person name="Lapidus A."/>
            <person name="Barry K."/>
            <person name="Detter J.C."/>
            <person name="Glavina del Rio T."/>
            <person name="Hammon N."/>
            <person name="Israni S."/>
            <person name="Dalin E."/>
            <person name="Tice H."/>
            <person name="Pitluck S."/>
            <person name="Chain P."/>
            <person name="Malfatti S."/>
            <person name="Shin M."/>
            <person name="Vergez L."/>
            <person name="Schmutz J."/>
            <person name="Larimer F."/>
            <person name="Land M."/>
            <person name="Hauser L."/>
            <person name="Kyrpides N."/>
            <person name="Lykidis A."/>
            <person name="Tiedje J."/>
            <person name="Richardson P."/>
        </authorList>
    </citation>
    <scope>NUCLEOTIDE SEQUENCE [LARGE SCALE GENOMIC DNA]</scope>
    <source>
        <strain>W3-18-1</strain>
    </source>
</reference>
<comment type="function">
    <text evidence="1">Catalyzes the isomerization of sedoheptulose 7-phosphate in D-glycero-D-manno-heptose 7-phosphate.</text>
</comment>
<comment type="catalytic activity">
    <reaction evidence="1">
        <text>2 D-sedoheptulose 7-phosphate = D-glycero-alpha-D-manno-heptose 7-phosphate + D-glycero-beta-D-manno-heptose 7-phosphate</text>
        <dbReference type="Rhea" id="RHEA:27489"/>
        <dbReference type="ChEBI" id="CHEBI:57483"/>
        <dbReference type="ChEBI" id="CHEBI:60203"/>
        <dbReference type="ChEBI" id="CHEBI:60204"/>
        <dbReference type="EC" id="5.3.1.28"/>
    </reaction>
</comment>
<comment type="cofactor">
    <cofactor evidence="1">
        <name>Zn(2+)</name>
        <dbReference type="ChEBI" id="CHEBI:29105"/>
    </cofactor>
    <text evidence="1">Binds 1 zinc ion per subunit.</text>
</comment>
<comment type="pathway">
    <text evidence="1">Carbohydrate biosynthesis; D-glycero-D-manno-heptose 7-phosphate biosynthesis; D-glycero-alpha-D-manno-heptose 7-phosphate and D-glycero-beta-D-manno-heptose 7-phosphate from sedoheptulose 7-phosphate: step 1/1.</text>
</comment>
<comment type="subunit">
    <text evidence="1">Homotetramer.</text>
</comment>
<comment type="subcellular location">
    <subcellularLocation>
        <location evidence="1">Cytoplasm</location>
    </subcellularLocation>
</comment>
<comment type="miscellaneous">
    <text evidence="1">The reaction produces a racemic mixture of D-glycero-alpha-D-manno-heptose 7-phosphate and D-glycero-beta-D-manno-heptose 7-phosphate.</text>
</comment>
<comment type="similarity">
    <text evidence="1">Belongs to the SIS family. GmhA subfamily.</text>
</comment>
<dbReference type="EC" id="5.3.1.28" evidence="1"/>
<dbReference type="EMBL" id="CP000503">
    <property type="protein sequence ID" value="ABM26641.1"/>
    <property type="molecule type" value="Genomic_DNA"/>
</dbReference>
<dbReference type="RefSeq" id="WP_011791066.1">
    <property type="nucleotide sequence ID" value="NC_008750.1"/>
</dbReference>
<dbReference type="SMR" id="A1RPP6"/>
<dbReference type="KEGG" id="shw:Sputw3181_3836"/>
<dbReference type="HOGENOM" id="CLU_080999_4_0_6"/>
<dbReference type="UniPathway" id="UPA00041">
    <property type="reaction ID" value="UER00436"/>
</dbReference>
<dbReference type="Proteomes" id="UP000002597">
    <property type="component" value="Chromosome"/>
</dbReference>
<dbReference type="GO" id="GO:0005737">
    <property type="term" value="C:cytoplasm"/>
    <property type="evidence" value="ECO:0007669"/>
    <property type="project" value="UniProtKB-SubCell"/>
</dbReference>
<dbReference type="GO" id="GO:0097367">
    <property type="term" value="F:carbohydrate derivative binding"/>
    <property type="evidence" value="ECO:0007669"/>
    <property type="project" value="InterPro"/>
</dbReference>
<dbReference type="GO" id="GO:0008968">
    <property type="term" value="F:D-sedoheptulose 7-phosphate isomerase activity"/>
    <property type="evidence" value="ECO:0007669"/>
    <property type="project" value="UniProtKB-UniRule"/>
</dbReference>
<dbReference type="GO" id="GO:0008270">
    <property type="term" value="F:zinc ion binding"/>
    <property type="evidence" value="ECO:0007669"/>
    <property type="project" value="UniProtKB-UniRule"/>
</dbReference>
<dbReference type="GO" id="GO:0005975">
    <property type="term" value="P:carbohydrate metabolic process"/>
    <property type="evidence" value="ECO:0007669"/>
    <property type="project" value="UniProtKB-UniRule"/>
</dbReference>
<dbReference type="GO" id="GO:2001061">
    <property type="term" value="P:D-glycero-D-manno-heptose 7-phosphate biosynthetic process"/>
    <property type="evidence" value="ECO:0007669"/>
    <property type="project" value="UniProtKB-UniPathway"/>
</dbReference>
<dbReference type="CDD" id="cd05006">
    <property type="entry name" value="SIS_GmhA"/>
    <property type="match status" value="1"/>
</dbReference>
<dbReference type="Gene3D" id="3.40.50.10490">
    <property type="entry name" value="Glucose-6-phosphate isomerase like protein, domain 1"/>
    <property type="match status" value="1"/>
</dbReference>
<dbReference type="HAMAP" id="MF_00067">
    <property type="entry name" value="GmhA"/>
    <property type="match status" value="1"/>
</dbReference>
<dbReference type="InterPro" id="IPR035461">
    <property type="entry name" value="GmhA/DiaA"/>
</dbReference>
<dbReference type="InterPro" id="IPR004515">
    <property type="entry name" value="Phosphoheptose_Isoase"/>
</dbReference>
<dbReference type="InterPro" id="IPR001347">
    <property type="entry name" value="SIS_dom"/>
</dbReference>
<dbReference type="InterPro" id="IPR046348">
    <property type="entry name" value="SIS_dom_sf"/>
</dbReference>
<dbReference type="InterPro" id="IPR050099">
    <property type="entry name" value="SIS_GmhA/DiaA_subfam"/>
</dbReference>
<dbReference type="NCBIfam" id="NF010546">
    <property type="entry name" value="PRK13936.1"/>
    <property type="match status" value="1"/>
</dbReference>
<dbReference type="PANTHER" id="PTHR30390:SF6">
    <property type="entry name" value="DNAA INITIATOR-ASSOCIATING PROTEIN DIAA"/>
    <property type="match status" value="1"/>
</dbReference>
<dbReference type="PANTHER" id="PTHR30390">
    <property type="entry name" value="SEDOHEPTULOSE 7-PHOSPHATE ISOMERASE / DNAA INITIATOR-ASSOCIATING FACTOR FOR REPLICATION INITIATION"/>
    <property type="match status" value="1"/>
</dbReference>
<dbReference type="Pfam" id="PF13580">
    <property type="entry name" value="SIS_2"/>
    <property type="match status" value="1"/>
</dbReference>
<dbReference type="SUPFAM" id="SSF53697">
    <property type="entry name" value="SIS domain"/>
    <property type="match status" value="1"/>
</dbReference>
<dbReference type="PROSITE" id="PS51464">
    <property type="entry name" value="SIS"/>
    <property type="match status" value="1"/>
</dbReference>
<feature type="chain" id="PRO_1000197029" description="Phosphoheptose isomerase">
    <location>
        <begin position="1"/>
        <end position="197"/>
    </location>
</feature>
<feature type="domain" description="SIS" evidence="1">
    <location>
        <begin position="34"/>
        <end position="196"/>
    </location>
</feature>
<feature type="binding site" evidence="1">
    <location>
        <begin position="49"/>
        <end position="51"/>
    </location>
    <ligand>
        <name>substrate</name>
    </ligand>
</feature>
<feature type="binding site" evidence="1">
    <location>
        <position position="58"/>
    </location>
    <ligand>
        <name>Zn(2+)</name>
        <dbReference type="ChEBI" id="CHEBI:29105"/>
    </ligand>
</feature>
<feature type="binding site" evidence="1">
    <location>
        <position position="62"/>
    </location>
    <ligand>
        <name>substrate</name>
    </ligand>
</feature>
<feature type="binding site" evidence="1">
    <location>
        <position position="62"/>
    </location>
    <ligand>
        <name>Zn(2+)</name>
        <dbReference type="ChEBI" id="CHEBI:29105"/>
    </ligand>
</feature>
<feature type="binding site" evidence="1">
    <location>
        <begin position="91"/>
        <end position="92"/>
    </location>
    <ligand>
        <name>substrate</name>
    </ligand>
</feature>
<feature type="binding site" evidence="1">
    <location>
        <begin position="117"/>
        <end position="119"/>
    </location>
    <ligand>
        <name>substrate</name>
    </ligand>
</feature>
<feature type="binding site" evidence="1">
    <location>
        <position position="122"/>
    </location>
    <ligand>
        <name>substrate</name>
    </ligand>
</feature>
<feature type="binding site" evidence="1">
    <location>
        <position position="172"/>
    </location>
    <ligand>
        <name>substrate</name>
    </ligand>
</feature>
<feature type="binding site" evidence="1">
    <location>
        <position position="172"/>
    </location>
    <ligand>
        <name>Zn(2+)</name>
        <dbReference type="ChEBI" id="CHEBI:29105"/>
    </ligand>
</feature>
<feature type="binding site" evidence="1">
    <location>
        <position position="180"/>
    </location>
    <ligand>
        <name>Zn(2+)</name>
        <dbReference type="ChEBI" id="CHEBI:29105"/>
    </ligand>
</feature>
<protein>
    <recommendedName>
        <fullName evidence="1">Phosphoheptose isomerase</fullName>
        <ecNumber evidence="1">5.3.1.28</ecNumber>
    </recommendedName>
    <alternativeName>
        <fullName evidence="1">Sedoheptulose 7-phosphate isomerase</fullName>
    </alternativeName>
</protein>